<name>Y1150_LIMF3</name>
<organism>
    <name type="scientific">Limosilactobacillus fermentum (strain NBRC 3956 / LMG 18251)</name>
    <name type="common">Lactobacillus fermentum</name>
    <dbReference type="NCBI Taxonomy" id="334390"/>
    <lineage>
        <taxon>Bacteria</taxon>
        <taxon>Bacillati</taxon>
        <taxon>Bacillota</taxon>
        <taxon>Bacilli</taxon>
        <taxon>Lactobacillales</taxon>
        <taxon>Lactobacillaceae</taxon>
        <taxon>Limosilactobacillus</taxon>
    </lineage>
</organism>
<feature type="chain" id="PRO_1000131126" description="UPF0246 protein LAF_1150">
    <location>
        <begin position="1"/>
        <end position="247"/>
    </location>
</feature>
<comment type="similarity">
    <text evidence="1">Belongs to the UPF0246 family.</text>
</comment>
<protein>
    <recommendedName>
        <fullName evidence="1">UPF0246 protein LAF_1150</fullName>
    </recommendedName>
</protein>
<sequence length="247" mass="27439">MKMIISPAKQMVSDDEPLVRPTPIRFPAQVTELMADLKSRTPAELQELWRCSDKLARENVARVQAFDLKRVGTPAVFAYAGIQYQSLGAGVLTDRGLQNLGQRLYILSGLYGLLGAFDGILPYRLEMGAKGEIAGAKNLYQYWGARLYQALFASGDLVVNLASKEYSKAITPYLTPADRWVTVLFKQEKNGRLVQQATAAKKARGSLVRYLALENEPTLATIKAFTVGGYRYRADLSTEAEYVFVKD</sequence>
<gene>
    <name type="ordered locus">LAF_1150</name>
</gene>
<proteinExistence type="inferred from homology"/>
<dbReference type="EMBL" id="AP008937">
    <property type="protein sequence ID" value="BAG27486.1"/>
    <property type="molecule type" value="Genomic_DNA"/>
</dbReference>
<dbReference type="RefSeq" id="WP_012391381.1">
    <property type="nucleotide sequence ID" value="NC_010610.1"/>
</dbReference>
<dbReference type="SMR" id="B2GCV4"/>
<dbReference type="KEGG" id="lfe:LAF_1150"/>
<dbReference type="PATRIC" id="fig|334390.5.peg.1270"/>
<dbReference type="eggNOG" id="COG3022">
    <property type="taxonomic scope" value="Bacteria"/>
</dbReference>
<dbReference type="HOGENOM" id="CLU_061989_1_0_9"/>
<dbReference type="Proteomes" id="UP000001697">
    <property type="component" value="Chromosome"/>
</dbReference>
<dbReference type="GO" id="GO:0005829">
    <property type="term" value="C:cytosol"/>
    <property type="evidence" value="ECO:0007669"/>
    <property type="project" value="TreeGrafter"/>
</dbReference>
<dbReference type="GO" id="GO:0033194">
    <property type="term" value="P:response to hydroperoxide"/>
    <property type="evidence" value="ECO:0007669"/>
    <property type="project" value="TreeGrafter"/>
</dbReference>
<dbReference type="HAMAP" id="MF_00652">
    <property type="entry name" value="UPF0246"/>
    <property type="match status" value="1"/>
</dbReference>
<dbReference type="InterPro" id="IPR005583">
    <property type="entry name" value="YaaA"/>
</dbReference>
<dbReference type="NCBIfam" id="NF002543">
    <property type="entry name" value="PRK02101.1-4"/>
    <property type="match status" value="1"/>
</dbReference>
<dbReference type="PANTHER" id="PTHR30283:SF4">
    <property type="entry name" value="PEROXIDE STRESS RESISTANCE PROTEIN YAAA"/>
    <property type="match status" value="1"/>
</dbReference>
<dbReference type="PANTHER" id="PTHR30283">
    <property type="entry name" value="PEROXIDE STRESS RESPONSE PROTEIN YAAA"/>
    <property type="match status" value="1"/>
</dbReference>
<dbReference type="Pfam" id="PF03883">
    <property type="entry name" value="H2O2_YaaD"/>
    <property type="match status" value="1"/>
</dbReference>
<reference key="1">
    <citation type="journal article" date="2008" name="DNA Res.">
        <title>Comparative genome analysis of Lactobacillus reuteri and Lactobacillus fermentum reveal a genomic island for reuterin and cobalamin production.</title>
        <authorList>
            <person name="Morita H."/>
            <person name="Toh H."/>
            <person name="Fukuda S."/>
            <person name="Horikawa H."/>
            <person name="Oshima K."/>
            <person name="Suzuki T."/>
            <person name="Murakami M."/>
            <person name="Hisamatsu S."/>
            <person name="Kato Y."/>
            <person name="Takizawa T."/>
            <person name="Fukuoka H."/>
            <person name="Yoshimura T."/>
            <person name="Itoh K."/>
            <person name="O'Sullivan D.J."/>
            <person name="McKay L.L."/>
            <person name="Ohno H."/>
            <person name="Kikuchi J."/>
            <person name="Masaoka T."/>
            <person name="Hattori M."/>
        </authorList>
    </citation>
    <scope>NUCLEOTIDE SEQUENCE [LARGE SCALE GENOMIC DNA]</scope>
    <source>
        <strain>NBRC 3956 / LMG 18251</strain>
    </source>
</reference>
<accession>B2GCV4</accession>
<evidence type="ECO:0000255" key="1">
    <source>
        <dbReference type="HAMAP-Rule" id="MF_00652"/>
    </source>
</evidence>
<keyword id="KW-1185">Reference proteome</keyword>